<organism>
    <name type="scientific">Homo sapiens</name>
    <name type="common">Human</name>
    <dbReference type="NCBI Taxonomy" id="9606"/>
    <lineage>
        <taxon>Eukaryota</taxon>
        <taxon>Metazoa</taxon>
        <taxon>Chordata</taxon>
        <taxon>Craniata</taxon>
        <taxon>Vertebrata</taxon>
        <taxon>Euteleostomi</taxon>
        <taxon>Mammalia</taxon>
        <taxon>Eutheria</taxon>
        <taxon>Euarchontoglires</taxon>
        <taxon>Primates</taxon>
        <taxon>Haplorrhini</taxon>
        <taxon>Catarrhini</taxon>
        <taxon>Hominidae</taxon>
        <taxon>Homo</taxon>
    </lineage>
</organism>
<accession>Q4VC31</accession>
<accession>Q32LY6</accession>
<comment type="similarity">
    <text evidence="2">Belongs to the MIX23 family.</text>
</comment>
<dbReference type="EMBL" id="BC062725">
    <property type="protein sequence ID" value="AAH62725.1"/>
    <property type="molecule type" value="mRNA"/>
</dbReference>
<dbReference type="EMBL" id="BC109378">
    <property type="protein sequence ID" value="AAI09379.1"/>
    <property type="molecule type" value="mRNA"/>
</dbReference>
<dbReference type="CCDS" id="CCDS33838.1"/>
<dbReference type="RefSeq" id="NP_001017928.1">
    <property type="nucleotide sequence ID" value="NM_001017928.4"/>
</dbReference>
<dbReference type="RefSeq" id="NP_001295255.1">
    <property type="nucleotide sequence ID" value="NM_001308326.1"/>
</dbReference>
<dbReference type="SMR" id="Q4VC31"/>
<dbReference type="BioGRID" id="126270">
    <property type="interactions" value="40"/>
</dbReference>
<dbReference type="FunCoup" id="Q4VC31">
    <property type="interactions" value="1140"/>
</dbReference>
<dbReference type="IntAct" id="Q4VC31">
    <property type="interactions" value="23"/>
</dbReference>
<dbReference type="MINT" id="Q4VC31"/>
<dbReference type="STRING" id="9606.ENSP00000291458"/>
<dbReference type="CarbonylDB" id="Q4VC31"/>
<dbReference type="GlyGen" id="Q4VC31">
    <property type="glycosylation" value="1 site, 1 O-linked glycan (1 site)"/>
</dbReference>
<dbReference type="iPTMnet" id="Q4VC31"/>
<dbReference type="PhosphoSitePlus" id="Q4VC31"/>
<dbReference type="BioMuta" id="CCDC58"/>
<dbReference type="DMDM" id="74754617"/>
<dbReference type="jPOST" id="Q4VC31"/>
<dbReference type="MassIVE" id="Q4VC31"/>
<dbReference type="PaxDb" id="9606-ENSP00000291458"/>
<dbReference type="PeptideAtlas" id="Q4VC31"/>
<dbReference type="ProteomicsDB" id="62300"/>
<dbReference type="Pumba" id="Q4VC31"/>
<dbReference type="TopDownProteomics" id="Q4VC31"/>
<dbReference type="Antibodypedia" id="58352">
    <property type="antibodies" value="41 antibodies from 7 providers"/>
</dbReference>
<dbReference type="DNASU" id="131076"/>
<dbReference type="Ensembl" id="ENST00000291458.9">
    <property type="protein sequence ID" value="ENSP00000291458.5"/>
    <property type="gene ID" value="ENSG00000160124.9"/>
</dbReference>
<dbReference type="GeneID" id="131076"/>
<dbReference type="KEGG" id="hsa:131076"/>
<dbReference type="MANE-Select" id="ENST00000291458.9">
    <property type="protein sequence ID" value="ENSP00000291458.5"/>
    <property type="RefSeq nucleotide sequence ID" value="NM_001017928.4"/>
    <property type="RefSeq protein sequence ID" value="NP_001017928.1"/>
</dbReference>
<dbReference type="UCSC" id="uc003eey.4">
    <property type="organism name" value="human"/>
</dbReference>
<dbReference type="AGR" id="HGNC:31136"/>
<dbReference type="CTD" id="131076"/>
<dbReference type="DisGeNET" id="131076"/>
<dbReference type="GeneCards" id="MIX23"/>
<dbReference type="HGNC" id="HGNC:31136">
    <property type="gene designation" value="MIX23"/>
</dbReference>
<dbReference type="HPA" id="ENSG00000160124">
    <property type="expression patterns" value="Low tissue specificity"/>
</dbReference>
<dbReference type="MIM" id="620713">
    <property type="type" value="gene"/>
</dbReference>
<dbReference type="neXtProt" id="NX_Q4VC31"/>
<dbReference type="OpenTargets" id="ENSG00000160124"/>
<dbReference type="VEuPathDB" id="HostDB:ENSG00000160124"/>
<dbReference type="eggNOG" id="KOG4613">
    <property type="taxonomic scope" value="Eukaryota"/>
</dbReference>
<dbReference type="GeneTree" id="ENSGT00390000011053"/>
<dbReference type="InParanoid" id="Q4VC31"/>
<dbReference type="OMA" id="CRYFEPP"/>
<dbReference type="OrthoDB" id="5593818at2759"/>
<dbReference type="PAN-GO" id="Q4VC31">
    <property type="GO annotations" value="1 GO annotation based on evolutionary models"/>
</dbReference>
<dbReference type="PhylomeDB" id="Q4VC31"/>
<dbReference type="TreeFam" id="TF324875"/>
<dbReference type="PathwayCommons" id="Q4VC31"/>
<dbReference type="SignaLink" id="Q4VC31"/>
<dbReference type="BioGRID-ORCS" id="131076">
    <property type="hits" value="176 hits in 1076 CRISPR screens"/>
</dbReference>
<dbReference type="ChiTaRS" id="CCDC58">
    <property type="organism name" value="human"/>
</dbReference>
<dbReference type="GenomeRNAi" id="131076"/>
<dbReference type="Pharos" id="Q4VC31">
    <property type="development level" value="Tdark"/>
</dbReference>
<dbReference type="PRO" id="PR:Q4VC31"/>
<dbReference type="Proteomes" id="UP000005640">
    <property type="component" value="Chromosome 3"/>
</dbReference>
<dbReference type="RNAct" id="Q4VC31">
    <property type="molecule type" value="protein"/>
</dbReference>
<dbReference type="Bgee" id="ENSG00000160124">
    <property type="expression patterns" value="Expressed in buccal mucosa cell and 173 other cell types or tissues"/>
</dbReference>
<dbReference type="ExpressionAtlas" id="Q4VC31">
    <property type="expression patterns" value="baseline and differential"/>
</dbReference>
<dbReference type="GO" id="GO:0005758">
    <property type="term" value="C:mitochondrial intermembrane space"/>
    <property type="evidence" value="ECO:0007669"/>
    <property type="project" value="InterPro"/>
</dbReference>
<dbReference type="GO" id="GO:0005739">
    <property type="term" value="C:mitochondrion"/>
    <property type="evidence" value="ECO:0006056"/>
    <property type="project" value="FlyBase"/>
</dbReference>
<dbReference type="InterPro" id="IPR019171">
    <property type="entry name" value="MIX23"/>
</dbReference>
<dbReference type="PANTHER" id="PTHR31905">
    <property type="entry name" value="COILED-COIL DOMAIN-CONTAINING PROTEIN 58"/>
    <property type="match status" value="1"/>
</dbReference>
<dbReference type="PANTHER" id="PTHR31905:SF2">
    <property type="entry name" value="PROTEIN MIX23"/>
    <property type="match status" value="1"/>
</dbReference>
<dbReference type="Pfam" id="PF09774">
    <property type="entry name" value="MIX23"/>
    <property type="match status" value="1"/>
</dbReference>
<reference key="1">
    <citation type="journal article" date="2004" name="Genome Res.">
        <title>The status, quality, and expansion of the NIH full-length cDNA project: the Mammalian Gene Collection (MGC).</title>
        <authorList>
            <consortium name="The MGC Project Team"/>
        </authorList>
    </citation>
    <scope>NUCLEOTIDE SEQUENCE [LARGE SCALE MRNA]</scope>
</reference>
<reference key="2">
    <citation type="journal article" date="2009" name="Anal. Chem.">
        <title>Lys-N and trypsin cover complementary parts of the phosphoproteome in a refined SCX-based approach.</title>
        <authorList>
            <person name="Gauci S."/>
            <person name="Helbig A.O."/>
            <person name="Slijper M."/>
            <person name="Krijgsveld J."/>
            <person name="Heck A.J."/>
            <person name="Mohammed S."/>
        </authorList>
    </citation>
    <scope>ACETYLATION [LARGE SCALE ANALYSIS] AT ALA-2</scope>
    <scope>CLEAVAGE OF INITIATOR METHIONINE [LARGE SCALE ANALYSIS]</scope>
    <scope>IDENTIFICATION BY MASS SPECTROMETRY [LARGE SCALE ANALYSIS]</scope>
</reference>
<reference key="3">
    <citation type="journal article" date="2009" name="Science">
        <title>Lysine acetylation targets protein complexes and co-regulates major cellular functions.</title>
        <authorList>
            <person name="Choudhary C."/>
            <person name="Kumar C."/>
            <person name="Gnad F."/>
            <person name="Nielsen M.L."/>
            <person name="Rehman M."/>
            <person name="Walther T.C."/>
            <person name="Olsen J.V."/>
            <person name="Mann M."/>
        </authorList>
    </citation>
    <scope>ACETYLATION [LARGE SCALE ANALYSIS] AT LYS-100</scope>
    <scope>IDENTIFICATION BY MASS SPECTROMETRY [LARGE SCALE ANALYSIS]</scope>
</reference>
<reference key="4">
    <citation type="journal article" date="2011" name="BMC Syst. Biol.">
        <title>Initial characterization of the human central proteome.</title>
        <authorList>
            <person name="Burkard T.R."/>
            <person name="Planyavsky M."/>
            <person name="Kaupe I."/>
            <person name="Breitwieser F.P."/>
            <person name="Buerckstuemmer T."/>
            <person name="Bennett K.L."/>
            <person name="Superti-Furga G."/>
            <person name="Colinge J."/>
        </authorList>
    </citation>
    <scope>IDENTIFICATION BY MASS SPECTROMETRY [LARGE SCALE ANALYSIS]</scope>
</reference>
<reference key="5">
    <citation type="journal article" date="2015" name="Proteomics">
        <title>N-terminome analysis of the human mitochondrial proteome.</title>
        <authorList>
            <person name="Vaca Jacome A.S."/>
            <person name="Rabilloud T."/>
            <person name="Schaeffer-Reiss C."/>
            <person name="Rompais M."/>
            <person name="Ayoub D."/>
            <person name="Lane L."/>
            <person name="Bairoch A."/>
            <person name="Van Dorsselaer A."/>
            <person name="Carapito C."/>
        </authorList>
    </citation>
    <scope>ACETYLATION [LARGE SCALE ANALYSIS] AT ALA-2</scope>
    <scope>CLEAVAGE OF INITIATOR METHIONINE [LARGE SCALE ANALYSIS]</scope>
    <scope>IDENTIFICATION BY MASS SPECTROMETRY [LARGE SCALE ANALYSIS]</scope>
</reference>
<feature type="initiator methionine" description="Removed" evidence="4 6">
    <location>
        <position position="1"/>
    </location>
</feature>
<feature type="chain" id="PRO_0000239441" description="Protein MIX23">
    <location>
        <begin position="2"/>
        <end position="144"/>
    </location>
</feature>
<feature type="coiled-coil region" evidence="1">
    <location>
        <begin position="82"/>
        <end position="120"/>
    </location>
</feature>
<feature type="modified residue" description="N-acetylalanine" evidence="4 6">
    <location>
        <position position="2"/>
    </location>
</feature>
<feature type="modified residue" description="N6-acetyllysine" evidence="5">
    <location>
        <position position="100"/>
    </location>
</feature>
<feature type="sequence conflict" description="In Ref. 1; AAI09379." evidence="2" ref="1">
    <original>PS</original>
    <variation>GG</variation>
    <location>
        <begin position="4"/>
        <end position="5"/>
    </location>
</feature>
<keyword id="KW-0007">Acetylation</keyword>
<keyword id="KW-0175">Coiled coil</keyword>
<keyword id="KW-1267">Proteomics identification</keyword>
<keyword id="KW-1185">Reference proteome</keyword>
<evidence type="ECO:0000255" key="1"/>
<evidence type="ECO:0000305" key="2"/>
<evidence type="ECO:0000312" key="3">
    <source>
        <dbReference type="HGNC" id="HGNC:31136"/>
    </source>
</evidence>
<evidence type="ECO:0007744" key="4">
    <source>
    </source>
</evidence>
<evidence type="ECO:0007744" key="5">
    <source>
    </source>
</evidence>
<evidence type="ECO:0007744" key="6">
    <source>
    </source>
</evidence>
<sequence>MAAPSGGVNCEEFAEFQELLKVMRTIDDRIVHELNTTVPTASFAGKIDASQTCKQLYESLMAAHASRDRVIKNCIAQTSAVVKNLREEREKNLDDLTLLKQLRKEQTKLKWMQSELNVEEVVNDRSWKVFNERCRIHFKPPKNE</sequence>
<protein>
    <recommendedName>
        <fullName evidence="2">Protein MIX23</fullName>
    </recommendedName>
    <alternativeName>
        <fullName>Coiled-coil domain-containing protein 58</fullName>
    </alternativeName>
</protein>
<gene>
    <name evidence="3" type="primary">MIX23</name>
    <name evidence="3" type="synonym">CCDC58</name>
</gene>
<proteinExistence type="evidence at protein level"/>
<name>MIX23_HUMAN</name>